<dbReference type="EC" id="3.6.4.13" evidence="2"/>
<dbReference type="EMBL" id="X52574">
    <property type="protein sequence ID" value="CAA36803.1"/>
    <property type="molecule type" value="mRNA"/>
</dbReference>
<dbReference type="EMBL" id="AK004542">
    <property type="protein sequence ID" value="BAB23358.1"/>
    <property type="molecule type" value="mRNA"/>
</dbReference>
<dbReference type="EMBL" id="BC053743">
    <property type="protein sequence ID" value="AAH53743.1"/>
    <property type="molecule type" value="mRNA"/>
</dbReference>
<dbReference type="EMBL" id="X75819">
    <property type="protein sequence ID" value="CAA53453.1"/>
    <property type="molecule type" value="Genomic_DNA"/>
</dbReference>
<dbReference type="CCDS" id="CCDS38579.1"/>
<dbReference type="CCDS" id="CCDS51033.1"/>
<dbReference type="PIR" id="A39611">
    <property type="entry name" value="A39611"/>
</dbReference>
<dbReference type="RefSeq" id="NP_001156912.2">
    <property type="nucleotide sequence ID" value="NM_001163440.2"/>
</dbReference>
<dbReference type="RefSeq" id="NP_001156913.1">
    <property type="nucleotide sequence ID" value="NM_001163441.2"/>
</dbReference>
<dbReference type="RefSeq" id="NP_032645.2">
    <property type="nucleotide sequence ID" value="NM_008619.3"/>
</dbReference>
<dbReference type="RefSeq" id="XP_006501163.1">
    <property type="nucleotide sequence ID" value="XM_006501100.1"/>
</dbReference>
<dbReference type="RefSeq" id="XP_006501164.1">
    <property type="nucleotide sequence ID" value="XM_006501101.4"/>
</dbReference>
<dbReference type="SMR" id="P23249"/>
<dbReference type="BioGRID" id="201471">
    <property type="interactions" value="30"/>
</dbReference>
<dbReference type="DIP" id="DIP-48575N"/>
<dbReference type="FunCoup" id="P23249">
    <property type="interactions" value="1224"/>
</dbReference>
<dbReference type="IntAct" id="P23249">
    <property type="interactions" value="5"/>
</dbReference>
<dbReference type="MINT" id="P23249"/>
<dbReference type="STRING" id="10090.ENSMUSP00000126897"/>
<dbReference type="GlyGen" id="P23249">
    <property type="glycosylation" value="3 sites, 1 O-linked glycan (1 site)"/>
</dbReference>
<dbReference type="iPTMnet" id="P23249"/>
<dbReference type="PhosphoSitePlus" id="P23249"/>
<dbReference type="SwissPalm" id="P23249"/>
<dbReference type="jPOST" id="P23249"/>
<dbReference type="PaxDb" id="10090-ENSMUSP00000126897"/>
<dbReference type="ProteomicsDB" id="295652"/>
<dbReference type="Pumba" id="P23249"/>
<dbReference type="Antibodypedia" id="20136">
    <property type="antibodies" value="172 antibodies from 26 providers"/>
</dbReference>
<dbReference type="DNASU" id="17454"/>
<dbReference type="Ensembl" id="ENSMUST00000168015.8">
    <property type="protein sequence ID" value="ENSMUSP00000128246.2"/>
    <property type="gene ID" value="ENSMUSG00000002227.16"/>
</dbReference>
<dbReference type="GeneID" id="17454"/>
<dbReference type="KEGG" id="mmu:17454"/>
<dbReference type="UCSC" id="uc008qum.3">
    <property type="organism name" value="mouse"/>
</dbReference>
<dbReference type="AGR" id="MGI:97054"/>
<dbReference type="CTD" id="4343"/>
<dbReference type="MGI" id="MGI:97054">
    <property type="gene designation" value="Mov10"/>
</dbReference>
<dbReference type="VEuPathDB" id="HostDB:ENSMUSG00000002227"/>
<dbReference type="eggNOG" id="KOG1804">
    <property type="taxonomic scope" value="Eukaryota"/>
</dbReference>
<dbReference type="GeneTree" id="ENSGT00940000156024"/>
<dbReference type="InParanoid" id="P23249"/>
<dbReference type="BioGRID-ORCS" id="17454">
    <property type="hits" value="2 hits in 79 CRISPR screens"/>
</dbReference>
<dbReference type="ChiTaRS" id="Mov10">
    <property type="organism name" value="mouse"/>
</dbReference>
<dbReference type="PRO" id="PR:P23249"/>
<dbReference type="Proteomes" id="UP000000589">
    <property type="component" value="Chromosome 3"/>
</dbReference>
<dbReference type="RNAct" id="P23249">
    <property type="molecule type" value="protein"/>
</dbReference>
<dbReference type="Bgee" id="ENSMUSG00000002227">
    <property type="expression patterns" value="Expressed in granulocyte and 169 other cell types or tissues"/>
</dbReference>
<dbReference type="ExpressionAtlas" id="P23249">
    <property type="expression patterns" value="baseline and differential"/>
</dbReference>
<dbReference type="GO" id="GO:0036464">
    <property type="term" value="C:cytoplasmic ribonucleoprotein granule"/>
    <property type="evidence" value="ECO:0000250"/>
    <property type="project" value="UniProtKB"/>
</dbReference>
<dbReference type="GO" id="GO:0010494">
    <property type="term" value="C:cytoplasmic stress granule"/>
    <property type="evidence" value="ECO:0007669"/>
    <property type="project" value="UniProtKB-SubCell"/>
</dbReference>
<dbReference type="GO" id="GO:0005829">
    <property type="term" value="C:cytosol"/>
    <property type="evidence" value="ECO:0000314"/>
    <property type="project" value="UniProtKB"/>
</dbReference>
<dbReference type="GO" id="GO:0005634">
    <property type="term" value="C:nucleus"/>
    <property type="evidence" value="ECO:0000314"/>
    <property type="project" value="UniProtKB"/>
</dbReference>
<dbReference type="GO" id="GO:0000932">
    <property type="term" value="C:P-body"/>
    <property type="evidence" value="ECO:0000250"/>
    <property type="project" value="UniProtKB"/>
</dbReference>
<dbReference type="GO" id="GO:0032574">
    <property type="term" value="F:5'-3' RNA helicase activity"/>
    <property type="evidence" value="ECO:0000250"/>
    <property type="project" value="UniProtKB"/>
</dbReference>
<dbReference type="GO" id="GO:0005524">
    <property type="term" value="F:ATP binding"/>
    <property type="evidence" value="ECO:0007669"/>
    <property type="project" value="UniProtKB-KW"/>
</dbReference>
<dbReference type="GO" id="GO:0016887">
    <property type="term" value="F:ATP hydrolysis activity"/>
    <property type="evidence" value="ECO:0007669"/>
    <property type="project" value="RHEA"/>
</dbReference>
<dbReference type="GO" id="GO:0003723">
    <property type="term" value="F:RNA binding"/>
    <property type="evidence" value="ECO:0000250"/>
    <property type="project" value="UniProtKB"/>
</dbReference>
<dbReference type="GO" id="GO:0061158">
    <property type="term" value="P:3'-UTR-mediated mRNA destabilization"/>
    <property type="evidence" value="ECO:0000250"/>
    <property type="project" value="UniProtKB"/>
</dbReference>
<dbReference type="GO" id="GO:0035279">
    <property type="term" value="P:miRNA-mediated gene silencing by mRNA destabilization"/>
    <property type="evidence" value="ECO:0000250"/>
    <property type="project" value="UniProtKB"/>
</dbReference>
<dbReference type="GO" id="GO:0035195">
    <property type="term" value="P:miRNA-mediated post-transcriptional gene silencing"/>
    <property type="evidence" value="ECO:0000250"/>
    <property type="project" value="UniProtKB"/>
</dbReference>
<dbReference type="GO" id="GO:0061014">
    <property type="term" value="P:positive regulation of mRNA catabolic process"/>
    <property type="evidence" value="ECO:0000250"/>
    <property type="project" value="UniProtKB"/>
</dbReference>
<dbReference type="GO" id="GO:0150011">
    <property type="term" value="P:regulation of neuron projection arborization"/>
    <property type="evidence" value="ECO:0000315"/>
    <property type="project" value="UniProtKB"/>
</dbReference>
<dbReference type="GO" id="GO:0010526">
    <property type="term" value="P:transposable element silencing"/>
    <property type="evidence" value="ECO:0000315"/>
    <property type="project" value="UniProtKB"/>
</dbReference>
<dbReference type="GO" id="GO:0141008">
    <property type="term" value="P:transposable element silencing by mRNA destabilization"/>
    <property type="evidence" value="ECO:0000250"/>
    <property type="project" value="UniProtKB"/>
</dbReference>
<dbReference type="CDD" id="cd18038">
    <property type="entry name" value="DEXXQc_Helz-like"/>
    <property type="match status" value="1"/>
</dbReference>
<dbReference type="CDD" id="cd18808">
    <property type="entry name" value="SF1_C_Upf1"/>
    <property type="match status" value="1"/>
</dbReference>
<dbReference type="FunFam" id="3.40.50.300:FF:000608">
    <property type="entry name" value="Mov10 RISC complex RNA helicase"/>
    <property type="match status" value="1"/>
</dbReference>
<dbReference type="FunFam" id="3.40.50.300:FF:000758">
    <property type="entry name" value="Mov10 RISC complex RNA helicase"/>
    <property type="match status" value="1"/>
</dbReference>
<dbReference type="Gene3D" id="3.40.50.300">
    <property type="entry name" value="P-loop containing nucleotide triphosphate hydrolases"/>
    <property type="match status" value="2"/>
</dbReference>
<dbReference type="InterPro" id="IPR041679">
    <property type="entry name" value="DNA2/NAM7-like_C"/>
</dbReference>
<dbReference type="InterPro" id="IPR041677">
    <property type="entry name" value="DNA2/NAM7_AAA_11"/>
</dbReference>
<dbReference type="InterPro" id="IPR049080">
    <property type="entry name" value="MOV-10-like_beta-barrel"/>
</dbReference>
<dbReference type="InterPro" id="IPR026122">
    <property type="entry name" value="MOV-10/SDE3_DEXXQ/H-box"/>
</dbReference>
<dbReference type="InterPro" id="IPR049079">
    <property type="entry name" value="Mov-10_helical"/>
</dbReference>
<dbReference type="InterPro" id="IPR049077">
    <property type="entry name" value="MOV-10_Ig-like"/>
</dbReference>
<dbReference type="InterPro" id="IPR049075">
    <property type="entry name" value="MOV-10_N"/>
</dbReference>
<dbReference type="InterPro" id="IPR027417">
    <property type="entry name" value="P-loop_NTPase"/>
</dbReference>
<dbReference type="InterPro" id="IPR047187">
    <property type="entry name" value="SF1_C_Upf1"/>
</dbReference>
<dbReference type="PANTHER" id="PTHR45418">
    <property type="entry name" value="CANCER/TESTIS ANTIGEN 55"/>
    <property type="match status" value="1"/>
</dbReference>
<dbReference type="PANTHER" id="PTHR45418:SF1">
    <property type="entry name" value="CANCER_TESTIS ANTIGEN 55"/>
    <property type="match status" value="1"/>
</dbReference>
<dbReference type="Pfam" id="PF13086">
    <property type="entry name" value="AAA_11"/>
    <property type="match status" value="2"/>
</dbReference>
<dbReference type="Pfam" id="PF13087">
    <property type="entry name" value="AAA_12"/>
    <property type="match status" value="1"/>
</dbReference>
<dbReference type="Pfam" id="PF21634">
    <property type="entry name" value="MOV-10_beta-barrel"/>
    <property type="match status" value="1"/>
</dbReference>
<dbReference type="Pfam" id="PF21635">
    <property type="entry name" value="Mov-10_helical"/>
    <property type="match status" value="1"/>
</dbReference>
<dbReference type="Pfam" id="PF21633">
    <property type="entry name" value="MOV-10_Ig-like"/>
    <property type="match status" value="1"/>
</dbReference>
<dbReference type="Pfam" id="PF21632">
    <property type="entry name" value="MOV-10_N"/>
    <property type="match status" value="1"/>
</dbReference>
<dbReference type="SUPFAM" id="SSF52540">
    <property type="entry name" value="P-loop containing nucleoside triphosphate hydrolases"/>
    <property type="match status" value="1"/>
</dbReference>
<comment type="function">
    <text evidence="2 4">5' to 3' RNA helicase that is involved in a number of cellular roles ranging from mRNA metabolism and translation, modulation of viral infectivity, inhibition of retrotransposition, or regulation of synaptic transmission. Plays an important role in innate antiviral immunity by promoting type I interferon production. Mechanistically, specifically uses IKKepsilon/IKBKE as the mediator kinase for IRF3 activation. Contributes to UPF1 mRNA target degradation by translocation along 3' UTRs. Required for microRNA (miRNA)-mediated gene silencing by the RNA-induced silencing complex (RISC). Required for both miRNA-mediated translational repression and miRNA-mediated cleavage of complementary mRNAs by RISC. In cooperation with FMR1, regulates miRNA-mediated translational repression by AGO2. Restricts retrotransposition of long interspersed element-1 (LINE-1) in cooperation with TUT4 and TUT7 counteracting the RNA chaperonne activity of L1RE1. Facilitates LINE-1 uridylation by TUT4 and TUT7 (By similarity). Required for embryonic viability and for normal central nervous system development and function. Plays two critical roles in early brain development: suppresses retroelements in the nucleus by directly inhibiting cDNA synthesis, while regulates cytoskeletal mRNAs to influence neurite outgrowth in the cytosol (PubMed:28662698). May function as a messenger ribonucleoprotein (mRNP) clearance factor (By similarity).</text>
</comment>
<comment type="catalytic activity">
    <reaction evidence="2">
        <text>ATP + H2O = ADP + phosphate + H(+)</text>
        <dbReference type="Rhea" id="RHEA:13065"/>
        <dbReference type="ChEBI" id="CHEBI:15377"/>
        <dbReference type="ChEBI" id="CHEBI:15378"/>
        <dbReference type="ChEBI" id="CHEBI:30616"/>
        <dbReference type="ChEBI" id="CHEBI:43474"/>
        <dbReference type="ChEBI" id="CHEBI:456216"/>
        <dbReference type="EC" id="3.6.4.13"/>
    </reaction>
</comment>
<comment type="subunit">
    <text evidence="2 4 6">Interacts with DICER1, AGO2, TARBP2, EIF6 and RPL7A (60S ribosome subunit); they form a large RNA-induced silencing complex (RISC). Interacts with APOBEC3G in an RNA-dependent manner. Interacts with TRIM71 (via NHL repeats) in an RNA-dependent manner (By similarity) (PubMed:28662698). Interacts with both protein products of LIRE1, ORF1p and ORF2p (PubMed:28662698). Interacts with TUT4 and, to a lesser extent, TUT7; the interactions are RNA-dependent. Interacts with AGO2, TNRC6B and UPF1; the interactions are direct and RNA-dependent. Interacts with FMR1; this interaction is direct, occurs in an RNA-dependent manner on polysomes and induces association of MOV10 with RNAs (By similarity). Interacts with SHFL; the interaction increases in presence of RNA (By similarity). Interacts with DHX34; the interaction is RNA-independent (By similarity). Interacts with RBM46 (PubMed:36001654).</text>
</comment>
<comment type="subcellular location">
    <subcellularLocation>
        <location evidence="2">Cytoplasm</location>
        <location evidence="2">P-body</location>
    </subcellularLocation>
    <subcellularLocation>
        <location evidence="4">Nucleus</location>
    </subcellularLocation>
    <subcellularLocation>
        <location evidence="4">Cytoplasm</location>
    </subcellularLocation>
    <subcellularLocation>
        <location evidence="2">Cytoplasm</location>
        <location evidence="2">Cytoplasmic ribonucleoprotein granule</location>
    </subcellularLocation>
    <subcellularLocation>
        <location evidence="2">Cytoplasm</location>
        <location evidence="2">Stress granule</location>
    </subcellularLocation>
    <text evidence="2 4">In young mouse (P2) neurons, localizes both in nucleus and cytoplasm, but in the adulthood it is only cytoplasmic (PubMed:28662698). Co-enriched in cytoplasmic foci with TUT4 (By similarity).</text>
</comment>
<comment type="developmental stage">
    <text evidence="4">As early as embryonic day 18, there is a higher level of expression in the whole brain compared to adults. Expression continues to rise at birth (P0) and remains elevated over adult levels until P10-P14, when it begins to decline (PubMed:28662698). Highly expressed throughout the P1 brain, including the cortex, hippocampus, cerebellum, midbrain, and hindbrain, there is very little expression in the adult brain except in the hippocampus (PubMed:28662698).</text>
</comment>
<comment type="PTM">
    <text evidence="5">Ubiquitinated by the DCX(DCAF12) complex that specifically recognizes the glutamate-leucine (Glu-Leu) degron at the C-terminus, leading to its degradation.</text>
</comment>
<comment type="disruption phenotype">
    <text evidence="4">Knockout leads to early embryonic lethality.</text>
</comment>
<comment type="similarity">
    <text evidence="7">Belongs to the DNA2/NAM7 helicase family. SDE3 subfamily.</text>
</comment>
<sequence>MPSKFSCRKLRETGQRFESFLAERGLDLETDRERLRTIYNHDFKPSYGTPAPGFSSMLYGMKIANLAFVTKTRVRFFKLDRWADVQLPEKRRIKPGSNISKQHRSLLARIFHDRAEYLHGKHGVDVEVQGPHEARDGQLLIHLDLNRKEVLTLRLRNGGSKPVTLTHLFPLCWTPQFVFYHGEQDLPCPLGPGESYELHIYCKTSIVGYFPATVLWELLGPGESGAEGAETFYIARFLAAVAHSPLAAQLKPTTPFKRPPRLTRNSVLTNRIEEGERPDRAKGYELELSLALGTYYPPILLRQLLPTLLQGPSIFTAPKEVAEIKAQLETTLKSRNYEVKLRLLLHLEELQMEHDIRHYDLDSVPMTWDPVDQNPRLLTLEVPGVAESRPSVLRGDHLFALLSSETQQDDPVTYKGFVHKVELDRVKLSFSTSLLSRFVDGLTFKVNFTFNRQPLRVQHRALELTGRWVLWPMLFPVASRGVSLLPSDVKFKLYDRSLESNPEQLQAMKHIVRGTTRPAPYIIFGPPGTGKTVTLVEAIKQVVKHLPKAHILACAPSNSGADLLCQRLRVHLPSSIYRLLAPSRDIRMVPEDIKTCCNWDAKKGEYVYPAKKHLQQYRVLITTLITASRLVSAQFPIDHFTHIFIDEAGHCMEPESLVAIAGLMDVKETGNPGGQLVLAGDPRQLGPVLRSPLALKHGLGYSLLERLLAYNSLYKKGPNGYDPQFITKLLRNYRSHPTILDIPNQLYYDGELQACADVVDRERFCRWEGLPQQGFPIIFHGVMGKDEREGNSPSFFNPEEAATVTSYLKQLLAPSSKKGKARLSPRNVGVISPYRKQVEKIRYCITKLDRELRGLDDIKDLKVGSVEEFQGQERSVILISTVRSSQSFVQLDLDFNLGFLKNPKRFNVAVTRAKALLIVVGNPLLLGHDPDWKTFLEFCKENGGYTGCPFPAKLDLQQGQDLLQGLSKLSPSTSGPRRHQNLPQEREGEGGLPLQVEPEWRNEL</sequence>
<name>MOV10_MOUSE</name>
<evidence type="ECO:0000250" key="1"/>
<evidence type="ECO:0000250" key="2">
    <source>
        <dbReference type="UniProtKB" id="Q9HCE1"/>
    </source>
</evidence>
<evidence type="ECO:0000256" key="3">
    <source>
        <dbReference type="SAM" id="MobiDB-lite"/>
    </source>
</evidence>
<evidence type="ECO:0000269" key="4">
    <source>
    </source>
</evidence>
<evidence type="ECO:0000269" key="5">
    <source>
    </source>
</evidence>
<evidence type="ECO:0000269" key="6">
    <source>
    </source>
</evidence>
<evidence type="ECO:0000305" key="7"/>
<reference key="1">
    <citation type="journal article" date="1991" name="Mol. Cell. Biol.">
        <title>Structure and expression of a gene encoding a putative GTP-binding protein identified by provirus integration in a transgenic mouse strain.</title>
        <authorList>
            <person name="Mooslehner K."/>
            <person name="Mueller U."/>
            <person name="Karls U."/>
            <person name="Hamann L."/>
            <person name="Harbers K."/>
        </authorList>
    </citation>
    <scope>NUCLEOTIDE SEQUENCE [MRNA]</scope>
</reference>
<reference key="2">
    <citation type="journal article" date="2005" name="Science">
        <title>The transcriptional landscape of the mammalian genome.</title>
        <authorList>
            <person name="Carninci P."/>
            <person name="Kasukawa T."/>
            <person name="Katayama S."/>
            <person name="Gough J."/>
            <person name="Frith M.C."/>
            <person name="Maeda N."/>
            <person name="Oyama R."/>
            <person name="Ravasi T."/>
            <person name="Lenhard B."/>
            <person name="Wells C."/>
            <person name="Kodzius R."/>
            <person name="Shimokawa K."/>
            <person name="Bajic V.B."/>
            <person name="Brenner S.E."/>
            <person name="Batalov S."/>
            <person name="Forrest A.R."/>
            <person name="Zavolan M."/>
            <person name="Davis M.J."/>
            <person name="Wilming L.G."/>
            <person name="Aidinis V."/>
            <person name="Allen J.E."/>
            <person name="Ambesi-Impiombato A."/>
            <person name="Apweiler R."/>
            <person name="Aturaliya R.N."/>
            <person name="Bailey T.L."/>
            <person name="Bansal M."/>
            <person name="Baxter L."/>
            <person name="Beisel K.W."/>
            <person name="Bersano T."/>
            <person name="Bono H."/>
            <person name="Chalk A.M."/>
            <person name="Chiu K.P."/>
            <person name="Choudhary V."/>
            <person name="Christoffels A."/>
            <person name="Clutterbuck D.R."/>
            <person name="Crowe M.L."/>
            <person name="Dalla E."/>
            <person name="Dalrymple B.P."/>
            <person name="de Bono B."/>
            <person name="Della Gatta G."/>
            <person name="di Bernardo D."/>
            <person name="Down T."/>
            <person name="Engstrom P."/>
            <person name="Fagiolini M."/>
            <person name="Faulkner G."/>
            <person name="Fletcher C.F."/>
            <person name="Fukushima T."/>
            <person name="Furuno M."/>
            <person name="Futaki S."/>
            <person name="Gariboldi M."/>
            <person name="Georgii-Hemming P."/>
            <person name="Gingeras T.R."/>
            <person name="Gojobori T."/>
            <person name="Green R.E."/>
            <person name="Gustincich S."/>
            <person name="Harbers M."/>
            <person name="Hayashi Y."/>
            <person name="Hensch T.K."/>
            <person name="Hirokawa N."/>
            <person name="Hill D."/>
            <person name="Huminiecki L."/>
            <person name="Iacono M."/>
            <person name="Ikeo K."/>
            <person name="Iwama A."/>
            <person name="Ishikawa T."/>
            <person name="Jakt M."/>
            <person name="Kanapin A."/>
            <person name="Katoh M."/>
            <person name="Kawasawa Y."/>
            <person name="Kelso J."/>
            <person name="Kitamura H."/>
            <person name="Kitano H."/>
            <person name="Kollias G."/>
            <person name="Krishnan S.P."/>
            <person name="Kruger A."/>
            <person name="Kummerfeld S.K."/>
            <person name="Kurochkin I.V."/>
            <person name="Lareau L.F."/>
            <person name="Lazarevic D."/>
            <person name="Lipovich L."/>
            <person name="Liu J."/>
            <person name="Liuni S."/>
            <person name="McWilliam S."/>
            <person name="Madan Babu M."/>
            <person name="Madera M."/>
            <person name="Marchionni L."/>
            <person name="Matsuda H."/>
            <person name="Matsuzawa S."/>
            <person name="Miki H."/>
            <person name="Mignone F."/>
            <person name="Miyake S."/>
            <person name="Morris K."/>
            <person name="Mottagui-Tabar S."/>
            <person name="Mulder N."/>
            <person name="Nakano N."/>
            <person name="Nakauchi H."/>
            <person name="Ng P."/>
            <person name="Nilsson R."/>
            <person name="Nishiguchi S."/>
            <person name="Nishikawa S."/>
            <person name="Nori F."/>
            <person name="Ohara O."/>
            <person name="Okazaki Y."/>
            <person name="Orlando V."/>
            <person name="Pang K.C."/>
            <person name="Pavan W.J."/>
            <person name="Pavesi G."/>
            <person name="Pesole G."/>
            <person name="Petrovsky N."/>
            <person name="Piazza S."/>
            <person name="Reed J."/>
            <person name="Reid J.F."/>
            <person name="Ring B.Z."/>
            <person name="Ringwald M."/>
            <person name="Rost B."/>
            <person name="Ruan Y."/>
            <person name="Salzberg S.L."/>
            <person name="Sandelin A."/>
            <person name="Schneider C."/>
            <person name="Schoenbach C."/>
            <person name="Sekiguchi K."/>
            <person name="Semple C.A."/>
            <person name="Seno S."/>
            <person name="Sessa L."/>
            <person name="Sheng Y."/>
            <person name="Shibata Y."/>
            <person name="Shimada H."/>
            <person name="Shimada K."/>
            <person name="Silva D."/>
            <person name="Sinclair B."/>
            <person name="Sperling S."/>
            <person name="Stupka E."/>
            <person name="Sugiura K."/>
            <person name="Sultana R."/>
            <person name="Takenaka Y."/>
            <person name="Taki K."/>
            <person name="Tammoja K."/>
            <person name="Tan S.L."/>
            <person name="Tang S."/>
            <person name="Taylor M.S."/>
            <person name="Tegner J."/>
            <person name="Teichmann S.A."/>
            <person name="Ueda H.R."/>
            <person name="van Nimwegen E."/>
            <person name="Verardo R."/>
            <person name="Wei C.L."/>
            <person name="Yagi K."/>
            <person name="Yamanishi H."/>
            <person name="Zabarovsky E."/>
            <person name="Zhu S."/>
            <person name="Zimmer A."/>
            <person name="Hide W."/>
            <person name="Bult C."/>
            <person name="Grimmond S.M."/>
            <person name="Teasdale R.D."/>
            <person name="Liu E.T."/>
            <person name="Brusic V."/>
            <person name="Quackenbush J."/>
            <person name="Wahlestedt C."/>
            <person name="Mattick J.S."/>
            <person name="Hume D.A."/>
            <person name="Kai C."/>
            <person name="Sasaki D."/>
            <person name="Tomaru Y."/>
            <person name="Fukuda S."/>
            <person name="Kanamori-Katayama M."/>
            <person name="Suzuki M."/>
            <person name="Aoki J."/>
            <person name="Arakawa T."/>
            <person name="Iida J."/>
            <person name="Imamura K."/>
            <person name="Itoh M."/>
            <person name="Kato T."/>
            <person name="Kawaji H."/>
            <person name="Kawagashira N."/>
            <person name="Kawashima T."/>
            <person name="Kojima M."/>
            <person name="Kondo S."/>
            <person name="Konno H."/>
            <person name="Nakano K."/>
            <person name="Ninomiya N."/>
            <person name="Nishio T."/>
            <person name="Okada M."/>
            <person name="Plessy C."/>
            <person name="Shibata K."/>
            <person name="Shiraki T."/>
            <person name="Suzuki S."/>
            <person name="Tagami M."/>
            <person name="Waki K."/>
            <person name="Watahiki A."/>
            <person name="Okamura-Oho Y."/>
            <person name="Suzuki H."/>
            <person name="Kawai J."/>
            <person name="Hayashizaki Y."/>
        </authorList>
    </citation>
    <scope>NUCLEOTIDE SEQUENCE [LARGE SCALE MRNA]</scope>
    <source>
        <strain>C57BL/6J</strain>
        <tissue>Lung</tissue>
    </source>
</reference>
<reference key="3">
    <citation type="journal article" date="2004" name="Genome Res.">
        <title>The status, quality, and expansion of the NIH full-length cDNA project: the Mammalian Gene Collection (MGC).</title>
        <authorList>
            <consortium name="The MGC Project Team"/>
        </authorList>
    </citation>
    <scope>NUCLEOTIDE SEQUENCE [LARGE SCALE MRNA]</scope>
    <source>
        <tissue>Limb</tissue>
    </source>
</reference>
<reference key="4">
    <citation type="journal article" date="1994" name="Mol. Cell. Biol.">
        <title>Interaction of several related GC-box- and GT-box-binding proteins with the intronic enhancer is required for differential expression of the gb110 gene in embryonal carcinoma cells.</title>
        <authorList>
            <person name="Hamann L."/>
            <person name="Bayer K.-U."/>
            <person name="Jensen K."/>
            <person name="Harbers K."/>
        </authorList>
    </citation>
    <scope>NUCLEOTIDE SEQUENCE [GENOMIC DNA] OF 1-45</scope>
    <source>
        <strain>BALB/cJ</strain>
    </source>
</reference>
<reference key="5">
    <citation type="journal article" date="2009" name="Immunity">
        <title>The phagosomal proteome in interferon-gamma-activated macrophages.</title>
        <authorList>
            <person name="Trost M."/>
            <person name="English L."/>
            <person name="Lemieux S."/>
            <person name="Courcelles M."/>
            <person name="Desjardins M."/>
            <person name="Thibault P."/>
        </authorList>
    </citation>
    <scope>IDENTIFICATION BY MASS SPECTROMETRY [LARGE SCALE ANALYSIS]</scope>
</reference>
<reference key="6">
    <citation type="journal article" date="2010" name="Cell">
        <title>A tissue-specific atlas of mouse protein phosphorylation and expression.</title>
        <authorList>
            <person name="Huttlin E.L."/>
            <person name="Jedrychowski M.P."/>
            <person name="Elias J.E."/>
            <person name="Goswami T."/>
            <person name="Rad R."/>
            <person name="Beausoleil S.A."/>
            <person name="Villen J."/>
            <person name="Haas W."/>
            <person name="Sowa M.E."/>
            <person name="Gygi S.P."/>
        </authorList>
    </citation>
    <scope>IDENTIFICATION BY MASS SPECTROMETRY [LARGE SCALE ANALYSIS]</scope>
    <source>
        <tissue>Heart</tissue>
        <tissue>Kidney</tissue>
        <tissue>Liver</tissue>
        <tissue>Lung</tissue>
        <tissue>Spleen</tissue>
        <tissue>Testis</tissue>
    </source>
</reference>
<reference key="7">
    <citation type="journal article" date="2017" name="BMC Biol.">
        <title>Mov10 suppresses retroelements and regulates neuronal development and function in the developing brain.</title>
        <authorList>
            <person name="Skariah G."/>
            <person name="Seimetz J."/>
            <person name="Norsworthy M."/>
            <person name="Lannom M.C."/>
            <person name="Kenny P.J."/>
            <person name="Elrakhawy M."/>
            <person name="Forsthoefel C."/>
            <person name="Drnevich J."/>
            <person name="Kalsotra A."/>
            <person name="Ceman S."/>
        </authorList>
    </citation>
    <scope>FUNCTION</scope>
    <scope>DISRUPTION PHENOTYPE</scope>
    <scope>DEVELOPMENTAL STAGE</scope>
    <scope>SUBCELLULAR LOCATION</scope>
    <scope>RNA-BINDING</scope>
    <scope>MUTAGENESIS OF LYS-531</scope>
    <scope>INTERACTION WITH LIRE1</scope>
</reference>
<reference key="8">
    <citation type="journal article" date="2021" name="Int. J. Mol. Sci.">
        <title>CRL4-DCAF12 Ubiquitin Ligase Controls MOV10 RNA Helicase during Spermatogenesis and T Cell Activation.</title>
        <authorList>
            <person name="Lidak T."/>
            <person name="Baloghova N."/>
            <person name="Korinek V."/>
            <person name="Sedlacek R."/>
            <person name="Balounova J."/>
            <person name="Kasparek P."/>
            <person name="Cermak L."/>
        </authorList>
    </citation>
    <scope>UBIQUITINATION</scope>
    <scope>TISSUE SPECIFICITY</scope>
</reference>
<reference key="9">
    <citation type="journal article" date="2022" name="Sci. Adv.">
        <title>RNA binding protein RBM46 regulates mitotic-to-meiotic transition in spermatogenesis.</title>
        <authorList>
            <person name="Qian B."/>
            <person name="Li Y."/>
            <person name="Yan R."/>
            <person name="Han S."/>
            <person name="Bu Z."/>
            <person name="Gong J."/>
            <person name="Zheng B."/>
            <person name="Yuan Z."/>
            <person name="Ren S."/>
            <person name="He Q."/>
            <person name="Zhang J."/>
            <person name="Xu C."/>
            <person name="Wang R."/>
            <person name="Sun Z."/>
            <person name="Lin M."/>
            <person name="Zhou J."/>
            <person name="Ye L."/>
        </authorList>
    </citation>
    <scope>INTERACTION WITH RBM46</scope>
</reference>
<accession>P23249</accession>
<accession>Q9DC64</accession>
<gene>
    <name type="primary">Mov10</name>
    <name type="synonym">Gb110</name>
</gene>
<protein>
    <recommendedName>
        <fullName>Putative helicase MOV-10</fullName>
        <ecNumber evidence="2">3.6.4.13</ecNumber>
    </recommendedName>
    <alternativeName>
        <fullName>Moloney leukemia virus 10 protein</fullName>
    </alternativeName>
</protein>
<organism>
    <name type="scientific">Mus musculus</name>
    <name type="common">Mouse</name>
    <dbReference type="NCBI Taxonomy" id="10090"/>
    <lineage>
        <taxon>Eukaryota</taxon>
        <taxon>Metazoa</taxon>
        <taxon>Chordata</taxon>
        <taxon>Craniata</taxon>
        <taxon>Vertebrata</taxon>
        <taxon>Euteleostomi</taxon>
        <taxon>Mammalia</taxon>
        <taxon>Eutheria</taxon>
        <taxon>Euarchontoglires</taxon>
        <taxon>Glires</taxon>
        <taxon>Rodentia</taxon>
        <taxon>Myomorpha</taxon>
        <taxon>Muroidea</taxon>
        <taxon>Muridae</taxon>
        <taxon>Murinae</taxon>
        <taxon>Mus</taxon>
        <taxon>Mus</taxon>
    </lineage>
</organism>
<proteinExistence type="evidence at protein level"/>
<feature type="chain" id="PRO_0000080705" description="Putative helicase MOV-10">
    <location>
        <begin position="1"/>
        <end position="1004"/>
    </location>
</feature>
<feature type="region of interest" description="Interaction with AGO2 and APOBEC3G" evidence="1">
    <location>
        <begin position="922"/>
        <end position="966"/>
    </location>
</feature>
<feature type="region of interest" description="Disordered" evidence="3">
    <location>
        <begin position="966"/>
        <end position="1004"/>
    </location>
</feature>
<feature type="short sequence motif" description="DEAG box">
    <location>
        <begin position="646"/>
        <end position="649"/>
    </location>
</feature>
<feature type="binding site" evidence="1">
    <location>
        <begin position="525"/>
        <end position="532"/>
    </location>
    <ligand>
        <name>ATP</name>
        <dbReference type="ChEBI" id="CHEBI:30616"/>
    </ligand>
</feature>
<feature type="modified residue" description="N6-acetyllysine" evidence="2">
    <location>
        <position position="148"/>
    </location>
</feature>
<feature type="modified residue" description="Phosphothreonine" evidence="2">
    <location>
        <position position="254"/>
    </location>
</feature>
<feature type="modified residue" description="Phosphoserine" evidence="2">
    <location>
        <position position="433"/>
    </location>
</feature>
<feature type="modified residue" description="Phosphoserine" evidence="2">
    <location>
        <position position="970"/>
    </location>
</feature>
<feature type="mutagenesis site" description="Abolishes inhibition of retrotransposition." evidence="4">
    <original>K</original>
    <variation>A</variation>
    <location>
        <position position="531"/>
    </location>
</feature>
<feature type="sequence conflict" description="In Ref. 1; CAA36803." evidence="7" ref="1">
    <original>H</original>
    <variation>R</variation>
    <location>
        <position position="142"/>
    </location>
</feature>
<keyword id="KW-0007">Acetylation</keyword>
<keyword id="KW-0067">ATP-binding</keyword>
<keyword id="KW-0963">Cytoplasm</keyword>
<keyword id="KW-0347">Helicase</keyword>
<keyword id="KW-0378">Hydrolase</keyword>
<keyword id="KW-0547">Nucleotide-binding</keyword>
<keyword id="KW-0539">Nucleus</keyword>
<keyword id="KW-0597">Phosphoprotein</keyword>
<keyword id="KW-1185">Reference proteome</keyword>
<keyword id="KW-0694">RNA-binding</keyword>
<keyword id="KW-0943">RNA-mediated gene silencing</keyword>
<keyword id="KW-0832">Ubl conjugation</keyword>